<proteinExistence type="inferred from homology"/>
<feature type="chain" id="PRO_1000095850" description="Indole-3-glycerol phosphate synthase">
    <location>
        <begin position="1"/>
        <end position="278"/>
    </location>
</feature>
<reference key="1">
    <citation type="journal article" date="2010" name="J. Bacteriol.">
        <title>Complete genome sequence of Beijerinckia indica subsp. indica.</title>
        <authorList>
            <person name="Tamas I."/>
            <person name="Dedysh S.N."/>
            <person name="Liesack W."/>
            <person name="Stott M.B."/>
            <person name="Alam M."/>
            <person name="Murrell J.C."/>
            <person name="Dunfield P.F."/>
        </authorList>
    </citation>
    <scope>NUCLEOTIDE SEQUENCE [LARGE SCALE GENOMIC DNA]</scope>
    <source>
        <strain>ATCC 9039 / DSM 1715 / NCIMB 8712</strain>
    </source>
</reference>
<keyword id="KW-0028">Amino-acid biosynthesis</keyword>
<keyword id="KW-0057">Aromatic amino acid biosynthesis</keyword>
<keyword id="KW-0210">Decarboxylase</keyword>
<keyword id="KW-0456">Lyase</keyword>
<keyword id="KW-1185">Reference proteome</keyword>
<keyword id="KW-0822">Tryptophan biosynthesis</keyword>
<sequence>MADILKRIEAYKRQEIAQAKQSVSLDALRRQCESVEKPRGFIKALAAKQAEGRMALIAEIKKASPSKGLIRADFDPPALARAYEEGGAACLSVLTDTPSFQGSPEFLTIARQAVSLPALRKDFLFDPYQVFEARAWGADCILIIMACVDDELAGALRDAARELGMDCLVEVHDEAELIRALRLETPLIGINNRDLRTFNVSLETSERLAAKIPDDRMIVGESGIFTAQDCARLKAHRIGTVLVGESLMREQDVTAATRRLLDLPPEAVTGPVHAVLES</sequence>
<name>TRPC_BEII9</name>
<comment type="catalytic activity">
    <reaction evidence="1">
        <text>1-(2-carboxyphenylamino)-1-deoxy-D-ribulose 5-phosphate + H(+) = (1S,2R)-1-C-(indol-3-yl)glycerol 3-phosphate + CO2 + H2O</text>
        <dbReference type="Rhea" id="RHEA:23476"/>
        <dbReference type="ChEBI" id="CHEBI:15377"/>
        <dbReference type="ChEBI" id="CHEBI:15378"/>
        <dbReference type="ChEBI" id="CHEBI:16526"/>
        <dbReference type="ChEBI" id="CHEBI:58613"/>
        <dbReference type="ChEBI" id="CHEBI:58866"/>
        <dbReference type="EC" id="4.1.1.48"/>
    </reaction>
</comment>
<comment type="pathway">
    <text evidence="1">Amino-acid biosynthesis; L-tryptophan biosynthesis; L-tryptophan from chorismate: step 4/5.</text>
</comment>
<comment type="similarity">
    <text evidence="1">Belongs to the TrpC family.</text>
</comment>
<evidence type="ECO:0000255" key="1">
    <source>
        <dbReference type="HAMAP-Rule" id="MF_00134"/>
    </source>
</evidence>
<organism>
    <name type="scientific">Beijerinckia indica subsp. indica (strain ATCC 9039 / DSM 1715 / NCIMB 8712)</name>
    <dbReference type="NCBI Taxonomy" id="395963"/>
    <lineage>
        <taxon>Bacteria</taxon>
        <taxon>Pseudomonadati</taxon>
        <taxon>Pseudomonadota</taxon>
        <taxon>Alphaproteobacteria</taxon>
        <taxon>Hyphomicrobiales</taxon>
        <taxon>Beijerinckiaceae</taxon>
        <taxon>Beijerinckia</taxon>
    </lineage>
</organism>
<dbReference type="EC" id="4.1.1.48" evidence="1"/>
<dbReference type="EMBL" id="CP001016">
    <property type="protein sequence ID" value="ACB95056.1"/>
    <property type="molecule type" value="Genomic_DNA"/>
</dbReference>
<dbReference type="RefSeq" id="WP_012384413.1">
    <property type="nucleotide sequence ID" value="NC_010581.1"/>
</dbReference>
<dbReference type="SMR" id="B2IKL7"/>
<dbReference type="STRING" id="395963.Bind_1416"/>
<dbReference type="KEGG" id="bid:Bind_1416"/>
<dbReference type="eggNOG" id="COG0134">
    <property type="taxonomic scope" value="Bacteria"/>
</dbReference>
<dbReference type="HOGENOM" id="CLU_034247_2_0_5"/>
<dbReference type="OrthoDB" id="9804217at2"/>
<dbReference type="UniPathway" id="UPA00035">
    <property type="reaction ID" value="UER00043"/>
</dbReference>
<dbReference type="Proteomes" id="UP000001695">
    <property type="component" value="Chromosome"/>
</dbReference>
<dbReference type="GO" id="GO:0004425">
    <property type="term" value="F:indole-3-glycerol-phosphate synthase activity"/>
    <property type="evidence" value="ECO:0007669"/>
    <property type="project" value="UniProtKB-UniRule"/>
</dbReference>
<dbReference type="GO" id="GO:0004640">
    <property type="term" value="F:phosphoribosylanthranilate isomerase activity"/>
    <property type="evidence" value="ECO:0007669"/>
    <property type="project" value="TreeGrafter"/>
</dbReference>
<dbReference type="GO" id="GO:0000162">
    <property type="term" value="P:L-tryptophan biosynthetic process"/>
    <property type="evidence" value="ECO:0007669"/>
    <property type="project" value="UniProtKB-UniRule"/>
</dbReference>
<dbReference type="CDD" id="cd00331">
    <property type="entry name" value="IGPS"/>
    <property type="match status" value="1"/>
</dbReference>
<dbReference type="FunFam" id="3.20.20.70:FF:000024">
    <property type="entry name" value="Indole-3-glycerol phosphate synthase"/>
    <property type="match status" value="1"/>
</dbReference>
<dbReference type="Gene3D" id="3.20.20.70">
    <property type="entry name" value="Aldolase class I"/>
    <property type="match status" value="1"/>
</dbReference>
<dbReference type="HAMAP" id="MF_00134_B">
    <property type="entry name" value="IGPS_B"/>
    <property type="match status" value="1"/>
</dbReference>
<dbReference type="InterPro" id="IPR013785">
    <property type="entry name" value="Aldolase_TIM"/>
</dbReference>
<dbReference type="InterPro" id="IPR045186">
    <property type="entry name" value="Indole-3-glycerol_P_synth"/>
</dbReference>
<dbReference type="InterPro" id="IPR013798">
    <property type="entry name" value="Indole-3-glycerol_P_synth_dom"/>
</dbReference>
<dbReference type="InterPro" id="IPR001468">
    <property type="entry name" value="Indole-3-GlycerolPSynthase_CS"/>
</dbReference>
<dbReference type="InterPro" id="IPR011060">
    <property type="entry name" value="RibuloseP-bd_barrel"/>
</dbReference>
<dbReference type="NCBIfam" id="NF001370">
    <property type="entry name" value="PRK00278.1-2"/>
    <property type="match status" value="1"/>
</dbReference>
<dbReference type="NCBIfam" id="NF001373">
    <property type="entry name" value="PRK00278.1-6"/>
    <property type="match status" value="1"/>
</dbReference>
<dbReference type="NCBIfam" id="NF001377">
    <property type="entry name" value="PRK00278.2-4"/>
    <property type="match status" value="1"/>
</dbReference>
<dbReference type="PANTHER" id="PTHR22854:SF2">
    <property type="entry name" value="INDOLE-3-GLYCEROL-PHOSPHATE SYNTHASE"/>
    <property type="match status" value="1"/>
</dbReference>
<dbReference type="PANTHER" id="PTHR22854">
    <property type="entry name" value="TRYPTOPHAN BIOSYNTHESIS PROTEIN"/>
    <property type="match status" value="1"/>
</dbReference>
<dbReference type="Pfam" id="PF00218">
    <property type="entry name" value="IGPS"/>
    <property type="match status" value="1"/>
</dbReference>
<dbReference type="SUPFAM" id="SSF51366">
    <property type="entry name" value="Ribulose-phoshate binding barrel"/>
    <property type="match status" value="1"/>
</dbReference>
<dbReference type="PROSITE" id="PS00614">
    <property type="entry name" value="IGPS"/>
    <property type="match status" value="1"/>
</dbReference>
<gene>
    <name evidence="1" type="primary">trpC</name>
    <name type="ordered locus">Bind_1416</name>
</gene>
<protein>
    <recommendedName>
        <fullName evidence="1">Indole-3-glycerol phosphate synthase</fullName>
        <shortName evidence="1">IGPS</shortName>
        <ecNumber evidence="1">4.1.1.48</ecNumber>
    </recommendedName>
</protein>
<accession>B2IKL7</accession>